<proteinExistence type="inferred from homology"/>
<feature type="chain" id="PRO_0000104553" description="Serpentine receptor class gamma-3">
    <location>
        <begin position="1"/>
        <end position="332"/>
    </location>
</feature>
<feature type="transmembrane region" description="Helical" evidence="1">
    <location>
        <begin position="23"/>
        <end position="43"/>
    </location>
</feature>
<feature type="transmembrane region" description="Helical" evidence="1">
    <location>
        <begin position="72"/>
        <end position="92"/>
    </location>
</feature>
<feature type="transmembrane region" description="Helical" evidence="1">
    <location>
        <begin position="101"/>
        <end position="121"/>
    </location>
</feature>
<feature type="transmembrane region" description="Helical" evidence="1">
    <location>
        <begin position="144"/>
        <end position="164"/>
    </location>
</feature>
<feature type="transmembrane region" description="Helical" evidence="1">
    <location>
        <begin position="184"/>
        <end position="204"/>
    </location>
</feature>
<feature type="transmembrane region" description="Helical" evidence="1">
    <location>
        <begin position="231"/>
        <end position="251"/>
    </location>
</feature>
<feature type="transmembrane region" description="Helical" evidence="1">
    <location>
        <begin position="263"/>
        <end position="283"/>
    </location>
</feature>
<name>SRG3_CAEEL</name>
<evidence type="ECO:0000255" key="1"/>
<evidence type="ECO:0000305" key="2"/>
<dbReference type="EMBL" id="FO080617">
    <property type="protein sequence ID" value="CCD65203.1"/>
    <property type="molecule type" value="Genomic_DNA"/>
</dbReference>
<dbReference type="PIR" id="T15561">
    <property type="entry name" value="T15561"/>
</dbReference>
<dbReference type="RefSeq" id="NP_498372.1">
    <property type="nucleotide sequence ID" value="NM_065971.1"/>
</dbReference>
<dbReference type="FunCoup" id="P46572">
    <property type="interactions" value="2"/>
</dbReference>
<dbReference type="STRING" id="6239.C18F10.6.1"/>
<dbReference type="PaxDb" id="6239-C18F10.6"/>
<dbReference type="EnsemblMetazoa" id="C18F10.6.1">
    <property type="protein sequence ID" value="C18F10.6.1"/>
    <property type="gene ID" value="WBGene00005161"/>
</dbReference>
<dbReference type="GeneID" id="191829"/>
<dbReference type="KEGG" id="cel:CELE_C18F10.6"/>
<dbReference type="UCSC" id="C18F10.6">
    <property type="organism name" value="c. elegans"/>
</dbReference>
<dbReference type="AGR" id="WB:WBGene00005161"/>
<dbReference type="CTD" id="191829"/>
<dbReference type="WormBase" id="C18F10.6">
    <property type="protein sequence ID" value="CE02491"/>
    <property type="gene ID" value="WBGene00005161"/>
    <property type="gene designation" value="srg-3"/>
</dbReference>
<dbReference type="eggNOG" id="ENOG502TH4G">
    <property type="taxonomic scope" value="Eukaryota"/>
</dbReference>
<dbReference type="GeneTree" id="ENSGT00970000195841"/>
<dbReference type="HOGENOM" id="CLU_061253_1_0_1"/>
<dbReference type="InParanoid" id="P46572"/>
<dbReference type="OMA" id="RMSCVMF"/>
<dbReference type="OrthoDB" id="5864134at2759"/>
<dbReference type="PhylomeDB" id="P46572"/>
<dbReference type="PRO" id="PR:P46572"/>
<dbReference type="Proteomes" id="UP000001940">
    <property type="component" value="Chromosome III"/>
</dbReference>
<dbReference type="GO" id="GO:0016020">
    <property type="term" value="C:membrane"/>
    <property type="evidence" value="ECO:0007669"/>
    <property type="project" value="UniProtKB-SubCell"/>
</dbReference>
<dbReference type="GO" id="GO:0004888">
    <property type="term" value="F:transmembrane signaling receptor activity"/>
    <property type="evidence" value="ECO:0007669"/>
    <property type="project" value="InterPro"/>
</dbReference>
<dbReference type="GO" id="GO:0007606">
    <property type="term" value="P:sensory perception of chemical stimulus"/>
    <property type="evidence" value="ECO:0007669"/>
    <property type="project" value="InterPro"/>
</dbReference>
<dbReference type="InterPro" id="IPR000609">
    <property type="entry name" value="7TM_GPCR_serpentine_rcpt_Srg"/>
</dbReference>
<dbReference type="InterPro" id="IPR051119">
    <property type="entry name" value="Nematode_SR-like"/>
</dbReference>
<dbReference type="PANTHER" id="PTHR31627:SF9">
    <property type="entry name" value="SERPENTINE RECEPTOR CLASS GAMMA-3"/>
    <property type="match status" value="1"/>
</dbReference>
<dbReference type="PANTHER" id="PTHR31627">
    <property type="entry name" value="SERPENTINE RECEPTOR CLASS GAMMA-RELATED"/>
    <property type="match status" value="1"/>
</dbReference>
<dbReference type="Pfam" id="PF02118">
    <property type="entry name" value="Srg"/>
    <property type="match status" value="1"/>
</dbReference>
<dbReference type="PRINTS" id="PR00698">
    <property type="entry name" value="TMPROTEINSRG"/>
</dbReference>
<accession>P46572</accession>
<sequence>MSYEHCISGYTNFNENIHYFYQFAYLFTAICINYRILYVIWVSQRHFYRNQSFYNLYSVDCFTSVLAMSNELIFTRSFLYFPQLCVSFSEIVKNSPVFMRIYYCLLSYLIAIKPVIHIFIAVNRMSCVMFPVTYSQNWSQKLRIMLIVIFLAPFLVIWNVLISDNFIGYVNGGFGISYTRRVTWASLSLMQFTLIILTVLITMVTTTVTFYKMTTMKKRIKASERALCIAAALISVGFLLEAITQSFFAFFKEAPWLLDVMNYLRFATMDILFVGSPLVLLLVSDQFRGHVLGSRIGRTQRVSSINNTHSHIHHNTHHTMTRYSYFLWNVNK</sequence>
<protein>
    <recommendedName>
        <fullName>Serpentine receptor class gamma-3</fullName>
        <shortName>Protein srg-3</shortName>
    </recommendedName>
</protein>
<gene>
    <name type="primary">srg-3</name>
    <name type="ORF">C18F10.6</name>
</gene>
<reference key="1">
    <citation type="journal article" date="1998" name="Science">
        <title>Genome sequence of the nematode C. elegans: a platform for investigating biology.</title>
        <authorList>
            <consortium name="The C. elegans sequencing consortium"/>
        </authorList>
    </citation>
    <scope>NUCLEOTIDE SEQUENCE [LARGE SCALE GENOMIC DNA]</scope>
    <source>
        <strain>Bristol N2</strain>
    </source>
</reference>
<organism>
    <name type="scientific">Caenorhabditis elegans</name>
    <dbReference type="NCBI Taxonomy" id="6239"/>
    <lineage>
        <taxon>Eukaryota</taxon>
        <taxon>Metazoa</taxon>
        <taxon>Ecdysozoa</taxon>
        <taxon>Nematoda</taxon>
        <taxon>Chromadorea</taxon>
        <taxon>Rhabditida</taxon>
        <taxon>Rhabditina</taxon>
        <taxon>Rhabditomorpha</taxon>
        <taxon>Rhabditoidea</taxon>
        <taxon>Rhabditidae</taxon>
        <taxon>Peloderinae</taxon>
        <taxon>Caenorhabditis</taxon>
    </lineage>
</organism>
<comment type="subcellular location">
    <subcellularLocation>
        <location evidence="2">Membrane</location>
        <topology evidence="2">Multi-pass membrane protein</topology>
    </subcellularLocation>
</comment>
<comment type="similarity">
    <text evidence="2">Belongs to the nematode receptor-like protein srg family.</text>
</comment>
<keyword id="KW-0472">Membrane</keyword>
<keyword id="KW-1185">Reference proteome</keyword>
<keyword id="KW-0812">Transmembrane</keyword>
<keyword id="KW-1133">Transmembrane helix</keyword>